<protein>
    <recommendedName>
        <fullName evidence="10">Gephyrin</fullName>
    </recommendedName>
    <domain>
        <recommendedName>
            <fullName>Molybdopterin adenylyltransferase</fullName>
            <shortName>MPT adenylyltransferase</shortName>
            <ecNumber evidence="16">2.7.7.75</ecNumber>
        </recommendedName>
        <alternativeName>
            <fullName>Domain G</fullName>
        </alternativeName>
    </domain>
    <domain>
        <recommendedName>
            <fullName>Molybdopterin molybdenumtransferase</fullName>
            <shortName>MPT Mo-transferase</shortName>
            <ecNumber evidence="14 16">2.10.1.1</ecNumber>
        </recommendedName>
        <alternativeName>
            <fullName>Domain E</fullName>
        </alternativeName>
    </domain>
</protein>
<accession>Q9NQX3</accession>
<accession>Q96KU4</accession>
<accession>Q9H4E9</accession>
<accession>Q9P2G2</accession>
<gene>
    <name evidence="17" type="primary">GPHN</name>
    <name type="synonym">GPH</name>
    <name type="synonym">KIAA1385</name>
</gene>
<comment type="function">
    <text evidence="2 8 9">Microtubule-associated protein involved in membrane protein-cytoskeleton interactions. It is thought to anchor the inhibitory glycine receptor (GLYR) to subsynaptic microtubules (By similarity). Acts as a major instructive molecule at inhibitory synapses, where it also clusters GABA type A receptors (PubMed:25025157, PubMed:26613940).</text>
</comment>
<comment type="function">
    <text evidence="9">Also has a catalytic activity and catalyzes two steps in the biosynthesis of the molybdenum cofactor. In the first step, molybdopterin is adenylated. Subsequently, molybdate is inserted into adenylated molybdopterin and AMP is released.</text>
</comment>
<comment type="catalytic activity">
    <reaction evidence="16">
        <text>molybdopterin + ATP + H(+) = adenylyl-molybdopterin + diphosphate</text>
        <dbReference type="Rhea" id="RHEA:31331"/>
        <dbReference type="ChEBI" id="CHEBI:15378"/>
        <dbReference type="ChEBI" id="CHEBI:30616"/>
        <dbReference type="ChEBI" id="CHEBI:33019"/>
        <dbReference type="ChEBI" id="CHEBI:58698"/>
        <dbReference type="ChEBI" id="CHEBI:62727"/>
        <dbReference type="EC" id="2.7.7.75"/>
    </reaction>
    <physiologicalReaction direction="left-to-right" evidence="16">
        <dbReference type="Rhea" id="RHEA:31332"/>
    </physiologicalReaction>
</comment>
<comment type="catalytic activity">
    <reaction evidence="14 16">
        <text>adenylyl-molybdopterin + molybdate = Mo-molybdopterin + AMP + H(+)</text>
        <dbReference type="Rhea" id="RHEA:35047"/>
        <dbReference type="ChEBI" id="CHEBI:15378"/>
        <dbReference type="ChEBI" id="CHEBI:36264"/>
        <dbReference type="ChEBI" id="CHEBI:62727"/>
        <dbReference type="ChEBI" id="CHEBI:71302"/>
        <dbReference type="ChEBI" id="CHEBI:456215"/>
        <dbReference type="EC" id="2.10.1.1"/>
    </reaction>
    <physiologicalReaction direction="left-to-right" evidence="14 16">
        <dbReference type="Rhea" id="RHEA:35048"/>
    </physiologicalReaction>
</comment>
<comment type="cofactor">
    <cofactor evidence="1">
        <name>Mg(2+)</name>
        <dbReference type="ChEBI" id="CHEBI:18420"/>
    </cofactor>
</comment>
<comment type="activity regulation">
    <text evidence="1">Inhibited by copper and tungsten.</text>
</comment>
<comment type="pathway">
    <text evidence="5 7 9">Cofactor biosynthesis; molybdopterin biosynthesis.</text>
</comment>
<comment type="subunit">
    <text evidence="2 3 6 9">Homotrimer, homodimer and homooligomer (PubMed:26613940). Interacts with GABARAP (By similarity). Interacts with SRGAP2 (via SH3 domain) (By similarity). Interacts with GABRA3 (PubMed:26613940). Interacts with GLRB (PubMed:12684523, PubMed:26613940). GABRA3 and GLRB occupy overlapping binding sites (By similarity). Interacts with ARHGAP32; IQSEC3, INSYN1 and INSYN2A (By similarity).</text>
</comment>
<comment type="interaction">
    <interactant intactId="EBI-2371891">
        <id>Q9NQX3</id>
    </interactant>
    <interactant intactId="EBI-349105">
        <id>P63167</id>
        <label>DYNLL1</label>
    </interactant>
    <organismsDiffer>false</organismsDiffer>
    <experiments>4</experiments>
</comment>
<comment type="interaction">
    <interactant intactId="EBI-11043087">
        <id>Q9NQX3-2</id>
    </interactant>
    <interactant intactId="EBI-2691489">
        <id>Q8WV92</id>
        <label>MITD1</label>
    </interactant>
    <organismsDiffer>false</organismsDiffer>
    <experiments>3</experiments>
</comment>
<comment type="interaction">
    <interactant intactId="EBI-11043087">
        <id>Q9NQX3-2</id>
    </interactant>
    <interactant intactId="EBI-359352">
        <id>P25786</id>
        <label>PSMA1</label>
    </interactant>
    <organismsDiffer>false</organismsDiffer>
    <experiments>3</experiments>
</comment>
<comment type="subcellular location">
    <subcellularLocation>
        <location evidence="8 9">Postsynaptic cell membrane</location>
        <topology evidence="8">Lipid-anchor</topology>
        <orientation evidence="15">Cytoplasmic side</orientation>
    </subcellularLocation>
    <subcellularLocation>
        <location evidence="2">Cell membrane</location>
        <topology evidence="2">Lipid-anchor</topology>
        <orientation evidence="2">Cytoplasmic side</orientation>
    </subcellularLocation>
    <subcellularLocation>
        <location evidence="8">Cytoplasm</location>
        <location evidence="8">Cytosol</location>
    </subcellularLocation>
    <subcellularLocation>
        <location evidence="2">Cytoplasm</location>
        <location evidence="2">Cytoskeleton</location>
    </subcellularLocation>
    <subcellularLocation>
        <location evidence="9">Cell projection</location>
        <location evidence="9">Dendrite</location>
    </subcellularLocation>
    <subcellularLocation>
        <location evidence="3">Postsynaptic density</location>
    </subcellularLocation>
    <text evidence="2 8">Cytoplasmic face of glycinergic postsynaptic membranes (By similarity). Forms clusters at synapses (PubMed:25025157).</text>
</comment>
<comment type="alternative products">
    <event type="alternative splicing"/>
    <isoform>
        <id>Q9NQX3-1</id>
        <name>1</name>
        <sequence type="displayed"/>
    </isoform>
    <isoform>
        <id>Q9NQX3-2</id>
        <name>2</name>
        <sequence type="described" ref="VSP_021769"/>
    </isoform>
</comment>
<comment type="PTM">
    <text evidence="3 8">Palmitoylated (PubMed:25025157). Palmitoylation is stimulated by GABA type A receptors activity (By similarity). Palmitoylation by ZDHHC12 regulates clustering at synapses (PubMed:25025157).</text>
</comment>
<comment type="disease" evidence="5 7 9">
    <disease id="DI-01991">
        <name>Molybdenum cofactor deficiency C</name>
        <acronym>MOCODC</acronym>
        <description>A form of molybdenum cofactor deficiency, an autosomal recessive metabolic disorder leading to the pleiotropic loss of molybdoenzyme activities. It is clinically characterized by onset in infancy of poor feeding, intractable seizures, severe psychomotor retardation, and death in early childhood in most patients.</description>
        <dbReference type="MIM" id="615501"/>
    </disease>
    <text>The disease is caused by variants affecting the gene represented in this entry.</text>
</comment>
<comment type="similarity">
    <text evidence="13">In the N-terminal section; belongs to the MoaB/Mog family.</text>
</comment>
<comment type="similarity">
    <text evidence="13">In the C-terminal section; belongs to the MoeA family.</text>
</comment>
<comment type="sequence caution" evidence="13">
    <conflict type="erroneous initiation">
        <sequence resource="EMBL-CDS" id="BAA92623"/>
    </conflict>
    <text>Extended N-terminus.</text>
</comment>
<comment type="online information" name="Atlas of Genetics and Cytogenetics in Oncology and Haematology">
    <link uri="https://atlasgeneticsoncology.org/gene/317/GPHN"/>
</comment>
<dbReference type="EC" id="2.7.7.75" evidence="16"/>
<dbReference type="EC" id="2.10.1.1" evidence="14 16"/>
<dbReference type="EMBL" id="AJ272033">
    <property type="protein sequence ID" value="CAC81240.1"/>
    <property type="molecule type" value="mRNA"/>
</dbReference>
<dbReference type="EMBL" id="AF272663">
    <property type="protein sequence ID" value="AAF81785.1"/>
    <property type="molecule type" value="mRNA"/>
</dbReference>
<dbReference type="EMBL" id="AJ272343">
    <property type="protein sequence ID" value="CAC10537.1"/>
    <property type="molecule type" value="mRNA"/>
</dbReference>
<dbReference type="EMBL" id="AB037806">
    <property type="protein sequence ID" value="BAA92623.1"/>
    <property type="status" value="ALT_INIT"/>
    <property type="molecule type" value="mRNA"/>
</dbReference>
<dbReference type="EMBL" id="BC030016">
    <property type="protein sequence ID" value="AAH30016.1"/>
    <property type="molecule type" value="mRNA"/>
</dbReference>
<dbReference type="CCDS" id="CCDS32103.1">
    <molecule id="Q9NQX3-1"/>
</dbReference>
<dbReference type="CCDS" id="CCDS9777.1">
    <molecule id="Q9NQX3-2"/>
</dbReference>
<dbReference type="RefSeq" id="NP_001019389.1">
    <molecule id="Q9NQX3-1"/>
    <property type="nucleotide sequence ID" value="NM_001024218.2"/>
</dbReference>
<dbReference type="RefSeq" id="NP_065857.1">
    <molecule id="Q9NQX3-2"/>
    <property type="nucleotide sequence ID" value="NM_020806.5"/>
</dbReference>
<dbReference type="PDB" id="1JLJ">
    <property type="method" value="X-ray"/>
    <property type="resolution" value="1.60 A"/>
    <property type="chains" value="A/B/C=1-181"/>
</dbReference>
<dbReference type="PDBsum" id="1JLJ"/>
<dbReference type="SMR" id="Q9NQX3"/>
<dbReference type="BioGRID" id="115537">
    <property type="interactions" value="81"/>
</dbReference>
<dbReference type="DIP" id="DIP-41076N"/>
<dbReference type="FunCoup" id="Q9NQX3">
    <property type="interactions" value="984"/>
</dbReference>
<dbReference type="IntAct" id="Q9NQX3">
    <property type="interactions" value="38"/>
</dbReference>
<dbReference type="MINT" id="Q9NQX3"/>
<dbReference type="STRING" id="9606.ENSP00000417901"/>
<dbReference type="DrugBank" id="DB01942">
    <property type="generic name" value="Formic acid"/>
</dbReference>
<dbReference type="DrugBank" id="DB03366">
    <property type="generic name" value="Imidazole"/>
</dbReference>
<dbReference type="DrugBank" id="DB03766">
    <property type="generic name" value="Propanoic acid"/>
</dbReference>
<dbReference type="MoonDB" id="Q9NQX3">
    <property type="type" value="Curated"/>
</dbReference>
<dbReference type="MoonProt" id="Q9NQX3"/>
<dbReference type="GlyCosmos" id="Q9NQX3">
    <property type="glycosylation" value="2 sites, 1 glycan"/>
</dbReference>
<dbReference type="GlyGen" id="Q9NQX3">
    <property type="glycosylation" value="3 sites, 1 O-linked glycan (3 sites)"/>
</dbReference>
<dbReference type="iPTMnet" id="Q9NQX3"/>
<dbReference type="PhosphoSitePlus" id="Q9NQX3"/>
<dbReference type="BioMuta" id="GPHN"/>
<dbReference type="DMDM" id="13431554"/>
<dbReference type="jPOST" id="Q9NQX3"/>
<dbReference type="MassIVE" id="Q9NQX3"/>
<dbReference type="PaxDb" id="9606-ENSP00000417901"/>
<dbReference type="PeptideAtlas" id="Q9NQX3"/>
<dbReference type="ProteomicsDB" id="82221">
    <molecule id="Q9NQX3-1"/>
</dbReference>
<dbReference type="ProteomicsDB" id="82222">
    <molecule id="Q9NQX3-2"/>
</dbReference>
<dbReference type="Pumba" id="Q9NQX3"/>
<dbReference type="ABCD" id="Q9NQX3">
    <property type="antibodies" value="9 sequenced antibodies"/>
</dbReference>
<dbReference type="Antibodypedia" id="144">
    <property type="antibodies" value="460 antibodies from 40 providers"/>
</dbReference>
<dbReference type="DNASU" id="10243"/>
<dbReference type="Ensembl" id="ENST00000315266.9">
    <molecule id="Q9NQX3-1"/>
    <property type="protein sequence ID" value="ENSP00000312771.5"/>
    <property type="gene ID" value="ENSG00000171723.16"/>
</dbReference>
<dbReference type="Ensembl" id="ENST00000478722.6">
    <molecule id="Q9NQX3-2"/>
    <property type="protein sequence ID" value="ENSP00000417901.1"/>
    <property type="gene ID" value="ENSG00000171723.16"/>
</dbReference>
<dbReference type="GeneID" id="10243"/>
<dbReference type="KEGG" id="hsa:10243"/>
<dbReference type="MANE-Select" id="ENST00000478722.6">
    <molecule id="Q9NQX3-2"/>
    <property type="protein sequence ID" value="ENSP00000417901.1"/>
    <property type="RefSeq nucleotide sequence ID" value="NM_020806.5"/>
    <property type="RefSeq protein sequence ID" value="NP_065857.1"/>
</dbReference>
<dbReference type="UCSC" id="uc001xix.4">
    <molecule id="Q9NQX3-1"/>
    <property type="organism name" value="human"/>
</dbReference>
<dbReference type="AGR" id="HGNC:15465"/>
<dbReference type="CTD" id="10243"/>
<dbReference type="DisGeNET" id="10243"/>
<dbReference type="GeneCards" id="GPHN"/>
<dbReference type="GeneReviews" id="GPHN"/>
<dbReference type="HGNC" id="HGNC:15465">
    <property type="gene designation" value="GPHN"/>
</dbReference>
<dbReference type="HPA" id="ENSG00000171723">
    <property type="expression patterns" value="Tissue enhanced (brain, liver)"/>
</dbReference>
<dbReference type="MalaCards" id="GPHN"/>
<dbReference type="MIM" id="603930">
    <property type="type" value="gene"/>
</dbReference>
<dbReference type="MIM" id="615501">
    <property type="type" value="phenotype"/>
</dbReference>
<dbReference type="neXtProt" id="NX_Q9NQX3"/>
<dbReference type="OpenTargets" id="ENSG00000171723"/>
<dbReference type="Orphanet" id="3197">
    <property type="disease" value="Hereditary hyperekplexia"/>
</dbReference>
<dbReference type="Orphanet" id="308400">
    <property type="disease" value="Sulfite oxidase deficiency due to molybdenum cofactor deficiency type C"/>
</dbReference>
<dbReference type="PharmGKB" id="PA28840"/>
<dbReference type="VEuPathDB" id="HostDB:ENSG00000171723"/>
<dbReference type="eggNOG" id="KOG2371">
    <property type="taxonomic scope" value="Eukaryota"/>
</dbReference>
<dbReference type="GeneTree" id="ENSGT00390000016577"/>
<dbReference type="HOGENOM" id="CLU_010186_2_2_1"/>
<dbReference type="InParanoid" id="Q9NQX3"/>
<dbReference type="OMA" id="ESPYPMI"/>
<dbReference type="OrthoDB" id="9520130at2759"/>
<dbReference type="PAN-GO" id="Q9NQX3">
    <property type="GO annotations" value="13 GO annotations based on evolutionary models"/>
</dbReference>
<dbReference type="PhylomeDB" id="Q9NQX3"/>
<dbReference type="TreeFam" id="TF300902"/>
<dbReference type="BioCyc" id="MetaCyc:ENSG00000171723-MONOMER"/>
<dbReference type="PathwayCommons" id="Q9NQX3"/>
<dbReference type="Reactome" id="R-HSA-947581">
    <property type="pathway name" value="Molybdenum cofactor biosynthesis"/>
</dbReference>
<dbReference type="SignaLink" id="Q9NQX3"/>
<dbReference type="SIGNOR" id="Q9NQX3"/>
<dbReference type="UniPathway" id="UPA00344"/>
<dbReference type="BioGRID-ORCS" id="10243">
    <property type="hits" value="12 hits in 1158 CRISPR screens"/>
</dbReference>
<dbReference type="CD-CODE" id="FB4E32DD">
    <property type="entry name" value="Presynaptic clusters and postsynaptic densities"/>
</dbReference>
<dbReference type="ChiTaRS" id="GPHN">
    <property type="organism name" value="human"/>
</dbReference>
<dbReference type="EvolutionaryTrace" id="Q9NQX3"/>
<dbReference type="GeneWiki" id="GPHN"/>
<dbReference type="GenomeRNAi" id="10243"/>
<dbReference type="Pharos" id="Q9NQX3">
    <property type="development level" value="Tbio"/>
</dbReference>
<dbReference type="PRO" id="PR:Q9NQX3"/>
<dbReference type="Proteomes" id="UP000005640">
    <property type="component" value="Chromosome 14"/>
</dbReference>
<dbReference type="RNAct" id="Q9NQX3">
    <property type="molecule type" value="protein"/>
</dbReference>
<dbReference type="Bgee" id="ENSG00000171723">
    <property type="expression patterns" value="Expressed in cerebellar cortex and 178 other cell types or tissues"/>
</dbReference>
<dbReference type="ExpressionAtlas" id="Q9NQX3">
    <property type="expression patterns" value="baseline and differential"/>
</dbReference>
<dbReference type="GO" id="GO:0005737">
    <property type="term" value="C:cytoplasm"/>
    <property type="evidence" value="ECO:0000318"/>
    <property type="project" value="GO_Central"/>
</dbReference>
<dbReference type="GO" id="GO:0009898">
    <property type="term" value="C:cytoplasmic side of plasma membrane"/>
    <property type="evidence" value="ECO:0007669"/>
    <property type="project" value="Ensembl"/>
</dbReference>
<dbReference type="GO" id="GO:0005856">
    <property type="term" value="C:cytoskeleton"/>
    <property type="evidence" value="ECO:0007669"/>
    <property type="project" value="UniProtKB-SubCell"/>
</dbReference>
<dbReference type="GO" id="GO:0005829">
    <property type="term" value="C:cytosol"/>
    <property type="evidence" value="ECO:0000250"/>
    <property type="project" value="UniProtKB"/>
</dbReference>
<dbReference type="GO" id="GO:0030425">
    <property type="term" value="C:dendrite"/>
    <property type="evidence" value="ECO:0000314"/>
    <property type="project" value="UniProtKB"/>
</dbReference>
<dbReference type="GO" id="GO:0043197">
    <property type="term" value="C:dendritic spine"/>
    <property type="evidence" value="ECO:0000314"/>
    <property type="project" value="UniProt"/>
</dbReference>
<dbReference type="GO" id="GO:0098982">
    <property type="term" value="C:GABA-ergic synapse"/>
    <property type="evidence" value="ECO:0007669"/>
    <property type="project" value="Ensembl"/>
</dbReference>
<dbReference type="GO" id="GO:0098690">
    <property type="term" value="C:glycinergic synapse"/>
    <property type="evidence" value="ECO:0007669"/>
    <property type="project" value="Ensembl"/>
</dbReference>
<dbReference type="GO" id="GO:0060077">
    <property type="term" value="C:inhibitory synapse"/>
    <property type="evidence" value="ECO:0007669"/>
    <property type="project" value="Ensembl"/>
</dbReference>
<dbReference type="GO" id="GO:0005886">
    <property type="term" value="C:plasma membrane"/>
    <property type="evidence" value="ECO:0000304"/>
    <property type="project" value="Reactome"/>
</dbReference>
<dbReference type="GO" id="GO:0014069">
    <property type="term" value="C:postsynaptic density"/>
    <property type="evidence" value="ECO:0000250"/>
    <property type="project" value="UniProtKB"/>
</dbReference>
<dbReference type="GO" id="GO:0045211">
    <property type="term" value="C:postsynaptic membrane"/>
    <property type="evidence" value="ECO:0000314"/>
    <property type="project" value="UniProtKB"/>
</dbReference>
<dbReference type="GO" id="GO:0099572">
    <property type="term" value="C:postsynaptic specialization"/>
    <property type="evidence" value="ECO:0000318"/>
    <property type="project" value="GO_Central"/>
</dbReference>
<dbReference type="GO" id="GO:0099091">
    <property type="term" value="C:postsynaptic specialization, intracellular component"/>
    <property type="evidence" value="ECO:0007669"/>
    <property type="project" value="Ensembl"/>
</dbReference>
<dbReference type="GO" id="GO:0097060">
    <property type="term" value="C:synaptic membrane"/>
    <property type="evidence" value="ECO:0000314"/>
    <property type="project" value="UniProtKB"/>
</dbReference>
<dbReference type="GO" id="GO:0005524">
    <property type="term" value="F:ATP binding"/>
    <property type="evidence" value="ECO:0007669"/>
    <property type="project" value="UniProtKB-KW"/>
</dbReference>
<dbReference type="GO" id="GO:0042802">
    <property type="term" value="F:identical protein binding"/>
    <property type="evidence" value="ECO:0000314"/>
    <property type="project" value="UniProtKB"/>
</dbReference>
<dbReference type="GO" id="GO:0046872">
    <property type="term" value="F:metal ion binding"/>
    <property type="evidence" value="ECO:0007669"/>
    <property type="project" value="UniProtKB-KW"/>
</dbReference>
<dbReference type="GO" id="GO:0061598">
    <property type="term" value="F:molybdopterin adenylyltransferase activity"/>
    <property type="evidence" value="ECO:0007669"/>
    <property type="project" value="UniProtKB-EC"/>
</dbReference>
<dbReference type="GO" id="GO:0043546">
    <property type="term" value="F:molybdopterin cofactor binding"/>
    <property type="evidence" value="ECO:0000314"/>
    <property type="project" value="CAFA"/>
</dbReference>
<dbReference type="GO" id="GO:0061599">
    <property type="term" value="F:molybdopterin molybdotransferase activity"/>
    <property type="evidence" value="ECO:0000318"/>
    <property type="project" value="GO_Central"/>
</dbReference>
<dbReference type="GO" id="GO:0008940">
    <property type="term" value="F:nitrate reductase activity"/>
    <property type="evidence" value="ECO:0000315"/>
    <property type="project" value="CAFA"/>
</dbReference>
<dbReference type="GO" id="GO:0030674">
    <property type="term" value="F:protein-macromolecule adaptor activity"/>
    <property type="evidence" value="ECO:0000315"/>
    <property type="project" value="UniProt"/>
</dbReference>
<dbReference type="GO" id="GO:0005102">
    <property type="term" value="F:signaling receptor binding"/>
    <property type="evidence" value="ECO:0007669"/>
    <property type="project" value="Ensembl"/>
</dbReference>
<dbReference type="GO" id="GO:0045184">
    <property type="term" value="P:establishment of protein localization"/>
    <property type="evidence" value="ECO:0007669"/>
    <property type="project" value="Ensembl"/>
</dbReference>
<dbReference type="GO" id="GO:0007529">
    <property type="term" value="P:establishment of synaptic specificity at neuromuscular junction"/>
    <property type="evidence" value="ECO:0000318"/>
    <property type="project" value="GO_Central"/>
</dbReference>
<dbReference type="GO" id="GO:0097112">
    <property type="term" value="P:gamma-aminobutyric acid receptor clustering"/>
    <property type="evidence" value="ECO:0000314"/>
    <property type="project" value="UniProtKB"/>
</dbReference>
<dbReference type="GO" id="GO:0072579">
    <property type="term" value="P:glycine receptor clustering"/>
    <property type="evidence" value="ECO:0000318"/>
    <property type="project" value="GO_Central"/>
</dbReference>
<dbReference type="GO" id="GO:0006777">
    <property type="term" value="P:Mo-molybdopterin cofactor biosynthetic process"/>
    <property type="evidence" value="ECO:0000318"/>
    <property type="project" value="GO_Central"/>
</dbReference>
<dbReference type="GO" id="GO:0032324">
    <property type="term" value="P:molybdopterin cofactor biosynthetic process"/>
    <property type="evidence" value="ECO:0000314"/>
    <property type="project" value="UniProtKB"/>
</dbReference>
<dbReference type="GO" id="GO:0099645">
    <property type="term" value="P:neurotransmitter receptor localization to postsynaptic specialization membrane"/>
    <property type="evidence" value="ECO:0007669"/>
    <property type="project" value="Ensembl"/>
</dbReference>
<dbReference type="GO" id="GO:0010038">
    <property type="term" value="P:response to metal ion"/>
    <property type="evidence" value="ECO:0000315"/>
    <property type="project" value="CAFA"/>
</dbReference>
<dbReference type="GO" id="GO:0007416">
    <property type="term" value="P:synapse assembly"/>
    <property type="evidence" value="ECO:0007669"/>
    <property type="project" value="Ensembl"/>
</dbReference>
<dbReference type="CDD" id="cd00887">
    <property type="entry name" value="MoeA"/>
    <property type="match status" value="1"/>
</dbReference>
<dbReference type="CDD" id="cd00886">
    <property type="entry name" value="MogA_MoaB"/>
    <property type="match status" value="1"/>
</dbReference>
<dbReference type="FunFam" id="2.170.190.11:FF:000001">
    <property type="entry name" value="Molybdopterin molybdenumtransferase"/>
    <property type="match status" value="1"/>
</dbReference>
<dbReference type="FunFam" id="2.40.340.10:FF:000001">
    <property type="entry name" value="Molybdopterin molybdenumtransferase"/>
    <property type="match status" value="1"/>
</dbReference>
<dbReference type="FunFam" id="3.40.980.10:FF:000001">
    <property type="entry name" value="Molybdopterin molybdenumtransferase"/>
    <property type="match status" value="1"/>
</dbReference>
<dbReference type="FunFam" id="3.40.980.10:FF:000002">
    <property type="entry name" value="Molybdopterin molybdenumtransferase"/>
    <property type="match status" value="1"/>
</dbReference>
<dbReference type="FunFam" id="3.90.105.10:FF:000004">
    <property type="entry name" value="Molybdopterin molybdenumtransferase"/>
    <property type="match status" value="1"/>
</dbReference>
<dbReference type="Gene3D" id="3.40.980.10">
    <property type="entry name" value="MoaB/Mog-like domain"/>
    <property type="match status" value="2"/>
</dbReference>
<dbReference type="Gene3D" id="2.40.340.10">
    <property type="entry name" value="MoeA, C-terminal, domain IV"/>
    <property type="match status" value="1"/>
</dbReference>
<dbReference type="Gene3D" id="3.90.105.10">
    <property type="entry name" value="Molybdopterin biosynthesis moea protein, domain 2"/>
    <property type="match status" value="1"/>
</dbReference>
<dbReference type="Gene3D" id="2.170.190.11">
    <property type="entry name" value="Molybdopterin biosynthesis moea protein, domain 3"/>
    <property type="match status" value="1"/>
</dbReference>
<dbReference type="InterPro" id="IPR036425">
    <property type="entry name" value="MoaB/Mog-like_dom_sf"/>
</dbReference>
<dbReference type="InterPro" id="IPR001453">
    <property type="entry name" value="MoaB/Mog_dom"/>
</dbReference>
<dbReference type="InterPro" id="IPR008284">
    <property type="entry name" value="MoCF_biosynth_CS"/>
</dbReference>
<dbReference type="InterPro" id="IPR038987">
    <property type="entry name" value="MoeA-like"/>
</dbReference>
<dbReference type="InterPro" id="IPR005111">
    <property type="entry name" value="MoeA_C_domain_IV"/>
</dbReference>
<dbReference type="InterPro" id="IPR036688">
    <property type="entry name" value="MoeA_C_domain_IV_sf"/>
</dbReference>
<dbReference type="InterPro" id="IPR005110">
    <property type="entry name" value="MoeA_linker/N"/>
</dbReference>
<dbReference type="InterPro" id="IPR036135">
    <property type="entry name" value="MoeA_linker/N_sf"/>
</dbReference>
<dbReference type="NCBIfam" id="NF045515">
    <property type="entry name" value="Glp_gephyrin"/>
    <property type="match status" value="1"/>
</dbReference>
<dbReference type="NCBIfam" id="TIGR00177">
    <property type="entry name" value="molyb_syn"/>
    <property type="match status" value="2"/>
</dbReference>
<dbReference type="PANTHER" id="PTHR10192:SF5">
    <property type="entry name" value="GEPHYRIN"/>
    <property type="match status" value="1"/>
</dbReference>
<dbReference type="PANTHER" id="PTHR10192">
    <property type="entry name" value="MOLYBDOPTERIN BIOSYNTHESIS PROTEIN"/>
    <property type="match status" value="1"/>
</dbReference>
<dbReference type="Pfam" id="PF00994">
    <property type="entry name" value="MoCF_biosynth"/>
    <property type="match status" value="2"/>
</dbReference>
<dbReference type="Pfam" id="PF03454">
    <property type="entry name" value="MoeA_C"/>
    <property type="match status" value="1"/>
</dbReference>
<dbReference type="Pfam" id="PF03453">
    <property type="entry name" value="MoeA_N"/>
    <property type="match status" value="1"/>
</dbReference>
<dbReference type="SMART" id="SM00852">
    <property type="entry name" value="MoCF_biosynth"/>
    <property type="match status" value="2"/>
</dbReference>
<dbReference type="SUPFAM" id="SSF63867">
    <property type="entry name" value="MoeA C-terminal domain-like"/>
    <property type="match status" value="1"/>
</dbReference>
<dbReference type="SUPFAM" id="SSF63882">
    <property type="entry name" value="MoeA N-terminal region -like"/>
    <property type="match status" value="1"/>
</dbReference>
<dbReference type="SUPFAM" id="SSF53218">
    <property type="entry name" value="Molybdenum cofactor biosynthesis proteins"/>
    <property type="match status" value="2"/>
</dbReference>
<dbReference type="PROSITE" id="PS01078">
    <property type="entry name" value="MOCF_BIOSYNTHESIS_1"/>
    <property type="match status" value="1"/>
</dbReference>
<dbReference type="PROSITE" id="PS01079">
    <property type="entry name" value="MOCF_BIOSYNTHESIS_2"/>
    <property type="match status" value="1"/>
</dbReference>
<sequence>MATEGMILTNHDHQIRVGVLTVSDSCFRNLAEDRSGINLKDLVQDPSLLGGTISAYKIVPDEIEEIKETLIDWCDEKELNLILTTGGTGFAPRDVTPEATKEVIEREAPGMALAMLMGSLNVTPLGMLSRPVCGIRGKTLIINLPGSKKGSQECFQFILPALPHAIDLLRDAIVKVKEVHDELEDLPSPPPPLSPPPTTSPHKQTEDKGVQCEEEEEEKKDSGVASTEDSSSSHITAAAIAAKIPDSIISRGVQVLPRDTASLSTTPSESPRAQATSRLSTASCPTPKVQSRCSSKENILRASHSAVDITKVARRHRMSPFPLTSMDKAFITVLEMTPVLGTEIINYRDGMGRVLAQDVYAKDNLPPFPASVKDGYAVRAADGPGDRFIIGESQAGEQPTQTVMPGQVMRVTTGAPIPCGADAVVQVEDTELIRESDDGTEELEVRILVQARPGQDIRPIGHDIKRGECVLAKGTHMGPSEIGLLATVGVTEVEVNKFPVVAVMSTGNELLNPEDDLLPGKIRDSNRSTLLATIQEHGYPTINLGIVGDNPDDLLNALNEGISRADVIITSGGVSMGEKDYLKQVLDIDLHAQIHFGRVFMKPGLPTTFATLDIDGVRKIIFALPGNPVSAVVTCNLFVVPALRKMQGILDPRPTIIKARLSCDVKLDPRPEYHRCILTWHHQEPLPWAQSTGNQMSSRLMSMRSANGLLMLPPKTEQYVELHKGEVVDVMVIGRL</sequence>
<evidence type="ECO:0000250" key="1"/>
<evidence type="ECO:0000250" key="2">
    <source>
        <dbReference type="UniProtKB" id="Q03555"/>
    </source>
</evidence>
<evidence type="ECO:0000250" key="3">
    <source>
        <dbReference type="UniProtKB" id="Q8BUV3"/>
    </source>
</evidence>
<evidence type="ECO:0000256" key="4">
    <source>
        <dbReference type="SAM" id="MobiDB-lite"/>
    </source>
</evidence>
<evidence type="ECO:0000269" key="5">
    <source>
    </source>
</evidence>
<evidence type="ECO:0000269" key="6">
    <source>
    </source>
</evidence>
<evidence type="ECO:0000269" key="7">
    <source>
    </source>
</evidence>
<evidence type="ECO:0000269" key="8">
    <source>
    </source>
</evidence>
<evidence type="ECO:0000269" key="9">
    <source>
    </source>
</evidence>
<evidence type="ECO:0000303" key="10">
    <source>
    </source>
</evidence>
<evidence type="ECO:0000303" key="11">
    <source>
    </source>
</evidence>
<evidence type="ECO:0000303" key="12">
    <source>
    </source>
</evidence>
<evidence type="ECO:0000305" key="13"/>
<evidence type="ECO:0000305" key="14">
    <source>
    </source>
</evidence>
<evidence type="ECO:0000305" key="15">
    <source>
    </source>
</evidence>
<evidence type="ECO:0000305" key="16">
    <source>
    </source>
</evidence>
<evidence type="ECO:0000312" key="17">
    <source>
        <dbReference type="HGNC" id="HGNC:15465"/>
    </source>
</evidence>
<evidence type="ECO:0007744" key="18">
    <source>
    </source>
</evidence>
<evidence type="ECO:0007744" key="19">
    <source>
    </source>
</evidence>
<evidence type="ECO:0007744" key="20">
    <source>
    </source>
</evidence>
<evidence type="ECO:0007744" key="21">
    <source>
    </source>
</evidence>
<evidence type="ECO:0007829" key="22">
    <source>
        <dbReference type="PDB" id="1JLJ"/>
    </source>
</evidence>
<name>GEPH_HUMAN</name>
<proteinExistence type="evidence at protein level"/>
<feature type="chain" id="PRO_0000170964" description="Gephyrin">
    <location>
        <begin position="1"/>
        <end position="736"/>
    </location>
</feature>
<feature type="region of interest" description="MPT Mo-transferase">
    <location>
        <begin position="14"/>
        <end position="166"/>
    </location>
</feature>
<feature type="region of interest" description="Interaction with GABARAP" evidence="1">
    <location>
        <begin position="140"/>
        <end position="316"/>
    </location>
</feature>
<feature type="region of interest" description="Disordered" evidence="4">
    <location>
        <begin position="181"/>
        <end position="232"/>
    </location>
</feature>
<feature type="region of interest" description="Disordered" evidence="4">
    <location>
        <begin position="260"/>
        <end position="290"/>
    </location>
</feature>
<feature type="region of interest" description="MPT adenylyltransferase">
    <location>
        <begin position="326"/>
        <end position="736"/>
    </location>
</feature>
<feature type="compositionally biased region" description="Pro residues" evidence="4">
    <location>
        <begin position="187"/>
        <end position="199"/>
    </location>
</feature>
<feature type="compositionally biased region" description="Polar residues" evidence="4">
    <location>
        <begin position="261"/>
        <end position="290"/>
    </location>
</feature>
<feature type="modified residue" description="Phosphoserine" evidence="19 20 21">
    <location>
        <position position="188"/>
    </location>
</feature>
<feature type="modified residue" description="Phosphoserine" evidence="19 20 21">
    <location>
        <position position="194"/>
    </location>
</feature>
<feature type="modified residue" description="Phosphothreonine" evidence="21">
    <location>
        <position position="198"/>
    </location>
</feature>
<feature type="modified residue" description="Phosphoserine" evidence="3">
    <location>
        <position position="200"/>
    </location>
</feature>
<feature type="modified residue" description="Phosphoserine" evidence="3">
    <location>
        <position position="262"/>
    </location>
</feature>
<feature type="modified residue" description="Phosphothreonine" evidence="3">
    <location>
        <position position="265"/>
    </location>
</feature>
<feature type="modified residue" description="Phosphothreonine" evidence="18">
    <location>
        <position position="266"/>
    </location>
</feature>
<feature type="modified residue" description="Phosphoserine" evidence="3">
    <location>
        <position position="268"/>
    </location>
</feature>
<feature type="modified residue" description="Phosphoserine" evidence="3">
    <location>
        <position position="270"/>
    </location>
</feature>
<feature type="modified residue" description="Phosphoserine" evidence="21">
    <location>
        <position position="305"/>
    </location>
</feature>
<feature type="lipid moiety-binding region" description="S-palmitoyl cysteine" evidence="8">
    <location>
        <position position="212"/>
    </location>
</feature>
<feature type="lipid moiety-binding region" description="S-palmitoyl cysteine" evidence="8">
    <location>
        <position position="284"/>
    </location>
</feature>
<feature type="splice variant" id="VSP_021769" description="In isoform 2." evidence="11 12">
    <original>K</original>
    <variation>KKHPFYTSPAVVMAHGEQPIPGLINYSHHSTDER</variation>
    <location>
        <position position="243"/>
    </location>
</feature>
<feature type="sequence variant" id="VAR_044162" description="Found in a patient with hyperekplexia; uncertain significance; does not disrupt GLRB-GPHN interactions; does not affect the structural lattices formed by GPHN; dbSNP:rs121908539." evidence="6">
    <original>N</original>
    <variation>Y</variation>
    <location>
        <position position="10"/>
    </location>
</feature>
<feature type="sequence variant" id="VAR_075626" description="In MOCODC; patient phenotype resembling Dravet syndrome; abolishes postsynaptic clustering of GPHN; decreases cell-surface expression of GABA receptors; impairs postsynaptic currents; catalytically inactive; decreases binding affinity toward GABRA3; decreases binding affinity toward GLRB." evidence="9">
    <original>G</original>
    <variation>D</variation>
    <location>
        <position position="375"/>
    </location>
</feature>
<feature type="sequence variant" id="VAR_070275" description="In MOCODC; lacks molybdenum cofactor synthesis activity; dbSNP:rs397518420." evidence="7 9">
    <original>D</original>
    <variation>A</variation>
    <location>
        <position position="580"/>
    </location>
</feature>
<feature type="mutagenesis site" description="Decreased palmitoylation. Decreased clustering at synaptic membranes. Decreased function in gamma-aminobutyric acid receptor clustering. Loss of palmitoylation, decreased clustering at synaptic membranes and loss of function in gamma-aminobutyric acid receptor clustering; when associated with S-284." evidence="8">
    <original>C</original>
    <variation>S</variation>
    <location>
        <position position="212"/>
    </location>
</feature>
<feature type="mutagenesis site" description="Decreased palmitoylation. Decreased clustering at synaptic membranes. Decreased function in gamma-aminobutyric acid receptor clustering. Loss of palmitoylation, decreased clustering at synaptic membranes and loss of function in gamma-aminobutyric acid receptor clustering; when associated with S-212." evidence="8">
    <original>C</original>
    <variation>S</variation>
    <location>
        <position position="284"/>
    </location>
</feature>
<feature type="sequence conflict" description="In Ref. 1; CAC81240." evidence="13" ref="1">
    <original>A</original>
    <variation>V</variation>
    <location>
        <position position="261"/>
    </location>
</feature>
<feature type="strand" evidence="22">
    <location>
        <begin position="16"/>
        <end position="22"/>
    </location>
</feature>
<feature type="helix" evidence="22">
    <location>
        <begin position="24"/>
        <end position="27"/>
    </location>
</feature>
<feature type="helix" evidence="22">
    <location>
        <begin position="34"/>
        <end position="44"/>
    </location>
</feature>
<feature type="turn" evidence="22">
    <location>
        <begin position="46"/>
        <end position="49"/>
    </location>
</feature>
<feature type="strand" evidence="22">
    <location>
        <begin position="52"/>
        <end position="59"/>
    </location>
</feature>
<feature type="helix" evidence="22">
    <location>
        <begin position="63"/>
        <end position="75"/>
    </location>
</feature>
<feature type="strand" evidence="22">
    <location>
        <begin position="80"/>
        <end position="86"/>
    </location>
</feature>
<feature type="strand" evidence="22">
    <location>
        <begin position="89"/>
        <end position="91"/>
    </location>
</feature>
<feature type="helix" evidence="22">
    <location>
        <begin position="96"/>
        <end position="103"/>
    </location>
</feature>
<feature type="strand" evidence="22">
    <location>
        <begin position="105"/>
        <end position="107"/>
    </location>
</feature>
<feature type="helix" evidence="22">
    <location>
        <begin position="109"/>
        <end position="122"/>
    </location>
</feature>
<feature type="helix" evidence="22">
    <location>
        <begin position="124"/>
        <end position="128"/>
    </location>
</feature>
<feature type="strand" evidence="22">
    <location>
        <begin position="133"/>
        <end position="136"/>
    </location>
</feature>
<feature type="strand" evidence="22">
    <location>
        <begin position="139"/>
        <end position="144"/>
    </location>
</feature>
<feature type="helix" evidence="22">
    <location>
        <begin position="148"/>
        <end position="158"/>
    </location>
</feature>
<feature type="helix" evidence="22">
    <location>
        <begin position="159"/>
        <end position="161"/>
    </location>
</feature>
<feature type="helix" evidence="22">
    <location>
        <begin position="162"/>
        <end position="169"/>
    </location>
</feature>
<feature type="helix" evidence="22">
    <location>
        <begin position="175"/>
        <end position="178"/>
    </location>
</feature>
<keyword id="KW-0002">3D-structure</keyword>
<keyword id="KW-0025">Alternative splicing</keyword>
<keyword id="KW-0067">ATP-binding</keyword>
<keyword id="KW-1003">Cell membrane</keyword>
<keyword id="KW-0966">Cell projection</keyword>
<keyword id="KW-0963">Cytoplasm</keyword>
<keyword id="KW-0206">Cytoskeleton</keyword>
<keyword id="KW-0225">Disease variant</keyword>
<keyword id="KW-0449">Lipoprotein</keyword>
<keyword id="KW-0460">Magnesium</keyword>
<keyword id="KW-0472">Membrane</keyword>
<keyword id="KW-0479">Metal-binding</keyword>
<keyword id="KW-0500">Molybdenum</keyword>
<keyword id="KW-0501">Molybdenum cofactor biosynthesis</keyword>
<keyword id="KW-0511">Multifunctional enzyme</keyword>
<keyword id="KW-0547">Nucleotide-binding</keyword>
<keyword id="KW-0564">Palmitate</keyword>
<keyword id="KW-0597">Phosphoprotein</keyword>
<keyword id="KW-0628">Postsynaptic cell membrane</keyword>
<keyword id="KW-1267">Proteomics identification</keyword>
<keyword id="KW-1185">Reference proteome</keyword>
<keyword id="KW-0770">Synapse</keyword>
<keyword id="KW-0808">Transferase</keyword>
<reference key="1">
    <citation type="journal article" date="2000" name="Neuron">
        <title>Autoimmunity to gephyrin in Stiff-Man syndrome.</title>
        <authorList>
            <person name="Butler M.H."/>
            <person name="Hayashi A."/>
            <person name="Okoshi N."/>
            <person name="Villmann C."/>
            <person name="Becker C.M."/>
            <person name="Feng G."/>
            <person name="De Camilli P."/>
            <person name="Solimena M."/>
        </authorList>
    </citation>
    <scope>NUCLEOTIDE SEQUENCE [MRNA] (ISOFORM 1)</scope>
    <source>
        <tissue>Hippocampus</tissue>
    </source>
</reference>
<reference key="2">
    <citation type="journal article" date="2001" name="Am. J. Hum. Genet.">
        <title>A mutation in the gene for the neurotransmitter receptor-clustering protein gephyrin causes a novel form of molybdenum cofactor deficiency.</title>
        <authorList>
            <person name="Reiss J."/>
            <person name="Gross-Hardt S."/>
            <person name="Christensen E."/>
            <person name="Schmidt P."/>
            <person name="Mendel R.R."/>
            <person name="Schwarz G."/>
        </authorList>
    </citation>
    <scope>NUCLEOTIDE SEQUENCE [MRNA] (ISOFORM 1)</scope>
    <scope>INVOLVEMENT IN MOCODC</scope>
    <scope>PATHWAY</scope>
</reference>
<reference key="3">
    <citation type="journal article" date="2001" name="Gene">
        <title>The human gephyrin (GPHN) gene: structure, chromosome localization and expression in non-neuronal cells.</title>
        <authorList>
            <person name="David-Watine B."/>
        </authorList>
    </citation>
    <scope>NUCLEOTIDE SEQUENCE [MRNA] (ISOFORM 2)</scope>
    <source>
        <tissue>Kidney</tissue>
    </source>
</reference>
<reference key="4">
    <citation type="journal article" date="2000" name="DNA Res.">
        <title>Prediction of the coding sequences of unidentified human genes. XVI. The complete sequences of 150 new cDNA clones from brain which code for large proteins in vitro.</title>
        <authorList>
            <person name="Nagase T."/>
            <person name="Kikuno R."/>
            <person name="Ishikawa K."/>
            <person name="Hirosawa M."/>
            <person name="Ohara O."/>
        </authorList>
    </citation>
    <scope>NUCLEOTIDE SEQUENCE [LARGE SCALE MRNA] (ISOFORM 1)</scope>
    <source>
        <tissue>Brain</tissue>
    </source>
</reference>
<reference key="5">
    <citation type="journal article" date="2004" name="Genome Res.">
        <title>The status, quality, and expansion of the NIH full-length cDNA project: the Mammalian Gene Collection (MGC).</title>
        <authorList>
            <consortium name="The MGC Project Team"/>
        </authorList>
    </citation>
    <scope>NUCLEOTIDE SEQUENCE [LARGE SCALE MRNA] (ISOFORM 2)</scope>
    <source>
        <tissue>Testis</tissue>
    </source>
</reference>
<reference key="6">
    <citation type="journal article" date="2006" name="Nat. Biotechnol.">
        <title>A probability-based approach for high-throughput protein phosphorylation analysis and site localization.</title>
        <authorList>
            <person name="Beausoleil S.A."/>
            <person name="Villen J."/>
            <person name="Gerber S.A."/>
            <person name="Rush J."/>
            <person name="Gygi S.P."/>
        </authorList>
    </citation>
    <scope>PHOSPHORYLATION [LARGE SCALE ANALYSIS] AT THR-266</scope>
    <scope>IDENTIFICATION BY MASS SPECTROMETRY [LARGE SCALE ANALYSIS]</scope>
    <source>
        <tissue>Cervix carcinoma</tissue>
    </source>
</reference>
<reference key="7">
    <citation type="journal article" date="2008" name="Proc. Natl. Acad. Sci. U.S.A.">
        <title>A quantitative atlas of mitotic phosphorylation.</title>
        <authorList>
            <person name="Dephoure N."/>
            <person name="Zhou C."/>
            <person name="Villen J."/>
            <person name="Beausoleil S.A."/>
            <person name="Bakalarski C.E."/>
            <person name="Elledge S.J."/>
            <person name="Gygi S.P."/>
        </authorList>
    </citation>
    <scope>IDENTIFICATION BY MASS SPECTROMETRY [LARGE SCALE ANALYSIS]</scope>
    <source>
        <tissue>Cervix carcinoma</tissue>
    </source>
</reference>
<reference key="8">
    <citation type="journal article" date="2009" name="Sci. Signal.">
        <title>Quantitative phosphoproteomic analysis of T cell receptor signaling reveals system-wide modulation of protein-protein interactions.</title>
        <authorList>
            <person name="Mayya V."/>
            <person name="Lundgren D.H."/>
            <person name="Hwang S.-I."/>
            <person name="Rezaul K."/>
            <person name="Wu L."/>
            <person name="Eng J.K."/>
            <person name="Rodionov V."/>
            <person name="Han D.K."/>
        </authorList>
    </citation>
    <scope>PHOSPHORYLATION [LARGE SCALE ANALYSIS] AT SER-188 AND SER-194</scope>
    <scope>IDENTIFICATION BY MASS SPECTROMETRY [LARGE SCALE ANALYSIS]</scope>
    <source>
        <tissue>Leukemic T-cell</tissue>
    </source>
</reference>
<reference key="9">
    <citation type="journal article" date="2010" name="Sci. Signal.">
        <title>Quantitative phosphoproteomics reveals widespread full phosphorylation site occupancy during mitosis.</title>
        <authorList>
            <person name="Olsen J.V."/>
            <person name="Vermeulen M."/>
            <person name="Santamaria A."/>
            <person name="Kumar C."/>
            <person name="Miller M.L."/>
            <person name="Jensen L.J."/>
            <person name="Gnad F."/>
            <person name="Cox J."/>
            <person name="Jensen T.S."/>
            <person name="Nigg E.A."/>
            <person name="Brunak S."/>
            <person name="Mann M."/>
        </authorList>
    </citation>
    <scope>IDENTIFICATION BY MASS SPECTROMETRY [LARGE SCALE ANALYSIS]</scope>
    <source>
        <tissue>Cervix carcinoma</tissue>
    </source>
</reference>
<reference key="10">
    <citation type="journal article" date="2011" name="BMC Syst. Biol.">
        <title>Initial characterization of the human central proteome.</title>
        <authorList>
            <person name="Burkard T.R."/>
            <person name="Planyavsky M."/>
            <person name="Kaupe I."/>
            <person name="Breitwieser F.P."/>
            <person name="Buerckstuemmer T."/>
            <person name="Bennett K.L."/>
            <person name="Superti-Furga G."/>
            <person name="Colinge J."/>
        </authorList>
    </citation>
    <scope>IDENTIFICATION BY MASS SPECTROMETRY [LARGE SCALE ANALYSIS]</scope>
</reference>
<reference key="11">
    <citation type="journal article" date="2011" name="Sci. Signal.">
        <title>System-wide temporal characterization of the proteome and phosphoproteome of human embryonic stem cell differentiation.</title>
        <authorList>
            <person name="Rigbolt K.T."/>
            <person name="Prokhorova T.A."/>
            <person name="Akimov V."/>
            <person name="Henningsen J."/>
            <person name="Johansen P.T."/>
            <person name="Kratchmarova I."/>
            <person name="Kassem M."/>
            <person name="Mann M."/>
            <person name="Olsen J.V."/>
            <person name="Blagoev B."/>
        </authorList>
    </citation>
    <scope>PHOSPHORYLATION [LARGE SCALE ANALYSIS] AT SER-188 AND SER-194</scope>
    <scope>IDENTIFICATION BY MASS SPECTROMETRY [LARGE SCALE ANALYSIS]</scope>
</reference>
<reference key="12">
    <citation type="journal article" date="2013" name="J. Proteome Res.">
        <title>Toward a comprehensive characterization of a human cancer cell phosphoproteome.</title>
        <authorList>
            <person name="Zhou H."/>
            <person name="Di Palma S."/>
            <person name="Preisinger C."/>
            <person name="Peng M."/>
            <person name="Polat A.N."/>
            <person name="Heck A.J."/>
            <person name="Mohammed S."/>
        </authorList>
    </citation>
    <scope>IDENTIFICATION BY MASS SPECTROMETRY [LARGE SCALE ANALYSIS]</scope>
    <source>
        <tissue>Cervix carcinoma</tissue>
    </source>
</reference>
<reference key="13">
    <citation type="journal article" date="2014" name="J. Proteomics">
        <title>An enzyme assisted RP-RPLC approach for in-depth analysis of human liver phosphoproteome.</title>
        <authorList>
            <person name="Bian Y."/>
            <person name="Song C."/>
            <person name="Cheng K."/>
            <person name="Dong M."/>
            <person name="Wang F."/>
            <person name="Huang J."/>
            <person name="Sun D."/>
            <person name="Wang L."/>
            <person name="Ye M."/>
            <person name="Zou H."/>
        </authorList>
    </citation>
    <scope>PHOSPHORYLATION [LARGE SCALE ANALYSIS] AT SER-188; SER-194; THR-198 AND SER-305</scope>
    <scope>IDENTIFICATION BY MASS SPECTROMETRY [LARGE SCALE ANALYSIS]</scope>
    <source>
        <tissue>Liver</tissue>
    </source>
</reference>
<reference key="14">
    <citation type="journal article" date="2014" name="PLoS Biol.">
        <title>Palmitoylation of gephyrin controls receptor clustering and plasticity of GABAergic synapses.</title>
        <authorList>
            <person name="Dejanovic B."/>
            <person name="Semtner M."/>
            <person name="Ebert S."/>
            <person name="Lamkemeyer T."/>
            <person name="Neuser F."/>
            <person name="Luescher B."/>
            <person name="Meier J.C."/>
            <person name="Schwarz G."/>
        </authorList>
    </citation>
    <scope>FUNCTION</scope>
    <scope>SUBCELLULAR LOCATION</scope>
    <scope>TOPOLOGY</scope>
    <scope>PALMITOYLATION AT CYS-212 AND CYS-284</scope>
    <scope>MUTAGENESIS OF CYS-212 AND CYS-284</scope>
</reference>
<reference key="15">
    <citation type="journal article" date="2001" name="J. Mol. Biol.">
        <title>Crystal structures of human gephyrin and plant Cnx1 G domains: comparative analysis and functional implications.</title>
        <authorList>
            <person name="Schwarz G."/>
            <person name="Schrader N."/>
            <person name="Mendel R.R."/>
            <person name="Hecht H.-J."/>
            <person name="Schindelin H."/>
        </authorList>
    </citation>
    <scope>X-RAY CRYSTALLOGRAPHY (1.6 ANGSTROMS) OF 1-181</scope>
    <scope>SUBUNIT</scope>
</reference>
<reference key="16">
    <citation type="journal article" date="2003" name="J. Biol. Chem.">
        <title>Isoform heterogeneity of the human gephyrin gene (GPHN), binding domains to the glycine receptor, and mutation analysis in hyperekplexia.</title>
        <authorList>
            <person name="Rees M.I."/>
            <person name="Harvey K."/>
            <person name="Ward H."/>
            <person name="White J.H."/>
            <person name="Evans L."/>
            <person name="Duguid I.C."/>
            <person name="Hsu C.-C."/>
            <person name="Coleman S.L."/>
            <person name="Miller J."/>
            <person name="Baer K."/>
            <person name="Waldvogel H.J."/>
            <person name="Gibbon F."/>
            <person name="Smart T.G."/>
            <person name="Owen M.J."/>
            <person name="Harvey R.J."/>
            <person name="Snell R.G."/>
        </authorList>
    </citation>
    <scope>VARIANT TYR-10</scope>
    <scope>CHARACTERIZATION OF VARIANT TYR-10</scope>
    <scope>INTERACTION WITH GLRB</scope>
</reference>
<reference key="17">
    <citation type="journal article" date="2011" name="Clin. Genet.">
        <title>A GPHN point mutation leading to molybdenum cofactor deficiency.</title>
        <authorList>
            <person name="Reiss J."/>
            <person name="Lenz U."/>
            <person name="Aquaviva-Bourdain C."/>
            <person name="Joriot-Chekaf S."/>
            <person name="Mention-Mulliez K."/>
            <person name="Holder-Espinasse M."/>
        </authorList>
    </citation>
    <scope>VARIANT MOCODC ALA-580</scope>
    <scope>PATHWAY</scope>
</reference>
<reference key="18">
    <citation type="journal article" date="2015" name="EMBO Mol. Med.">
        <title>Simultaneous impairment of neuronal and metabolic function of mutated gephyrin in a patient with epileptic encephalopathy.</title>
        <authorList>
            <consortium name="EuroEPINOMICS Dravet working group"/>
            <person name="Dejanovic B."/>
            <person name="Djemie T."/>
            <person name="Gruenewald N."/>
            <person name="Suls A."/>
            <person name="Kress V."/>
            <person name="Hetsch F."/>
            <person name="Craiu D."/>
            <person name="Zemel M."/>
            <person name="Gormley P."/>
            <person name="Lal D."/>
            <person name="Myers C.T."/>
            <person name="Mefford H.C."/>
            <person name="Palotie A."/>
            <person name="Helbig I."/>
            <person name="Meier J.C."/>
            <person name="De Jonghe P."/>
            <person name="Weckhuysen S."/>
            <person name="Schwarz G."/>
        </authorList>
    </citation>
    <scope>VARIANT MOCODC ASP-375</scope>
    <scope>CHARACTERIZATION OF MOCODC VARIANTS ASP-375 AND ALA-580</scope>
    <scope>INTERACTION WITH GABRA3 AND GLRB</scope>
    <scope>SUBCELLULAR LOCATION</scope>
    <scope>SUBUNIT</scope>
    <scope>FUNCTION</scope>
    <scope>CATALYTIC ACTIVITY</scope>
    <scope>PATHWAY</scope>
</reference>
<organism>
    <name type="scientific">Homo sapiens</name>
    <name type="common">Human</name>
    <dbReference type="NCBI Taxonomy" id="9606"/>
    <lineage>
        <taxon>Eukaryota</taxon>
        <taxon>Metazoa</taxon>
        <taxon>Chordata</taxon>
        <taxon>Craniata</taxon>
        <taxon>Vertebrata</taxon>
        <taxon>Euteleostomi</taxon>
        <taxon>Mammalia</taxon>
        <taxon>Eutheria</taxon>
        <taxon>Euarchontoglires</taxon>
        <taxon>Primates</taxon>
        <taxon>Haplorrhini</taxon>
        <taxon>Catarrhini</taxon>
        <taxon>Hominidae</taxon>
        <taxon>Homo</taxon>
    </lineage>
</organism>